<proteinExistence type="inferred from homology"/>
<accession>Q3BV40</accession>
<evidence type="ECO:0000255" key="1">
    <source>
        <dbReference type="HAMAP-Rule" id="MF_01970"/>
    </source>
</evidence>
<feature type="chain" id="PRO_0000357015" description="Kynureninase">
    <location>
        <begin position="1"/>
        <end position="423"/>
    </location>
</feature>
<feature type="binding site" evidence="1">
    <location>
        <position position="105"/>
    </location>
    <ligand>
        <name>pyridoxal 5'-phosphate</name>
        <dbReference type="ChEBI" id="CHEBI:597326"/>
    </ligand>
</feature>
<feature type="binding site" evidence="1">
    <location>
        <position position="106"/>
    </location>
    <ligand>
        <name>pyridoxal 5'-phosphate</name>
        <dbReference type="ChEBI" id="CHEBI:597326"/>
    </ligand>
</feature>
<feature type="binding site" evidence="1">
    <location>
        <begin position="133"/>
        <end position="136"/>
    </location>
    <ligand>
        <name>pyridoxal 5'-phosphate</name>
        <dbReference type="ChEBI" id="CHEBI:597326"/>
    </ligand>
</feature>
<feature type="binding site" evidence="1">
    <location>
        <position position="218"/>
    </location>
    <ligand>
        <name>pyridoxal 5'-phosphate</name>
        <dbReference type="ChEBI" id="CHEBI:597326"/>
    </ligand>
</feature>
<feature type="binding site" evidence="1">
    <location>
        <position position="221"/>
    </location>
    <ligand>
        <name>pyridoxal 5'-phosphate</name>
        <dbReference type="ChEBI" id="CHEBI:597326"/>
    </ligand>
</feature>
<feature type="binding site" evidence="1">
    <location>
        <position position="243"/>
    </location>
    <ligand>
        <name>pyridoxal 5'-phosphate</name>
        <dbReference type="ChEBI" id="CHEBI:597326"/>
    </ligand>
</feature>
<feature type="binding site" evidence="1">
    <location>
        <position position="273"/>
    </location>
    <ligand>
        <name>pyridoxal 5'-phosphate</name>
        <dbReference type="ChEBI" id="CHEBI:597326"/>
    </ligand>
</feature>
<feature type="binding site" evidence="1">
    <location>
        <position position="301"/>
    </location>
    <ligand>
        <name>pyridoxal 5'-phosphate</name>
        <dbReference type="ChEBI" id="CHEBI:597326"/>
    </ligand>
</feature>
<feature type="modified residue" description="N6-(pyridoxal phosphate)lysine" evidence="1">
    <location>
        <position position="244"/>
    </location>
</feature>
<sequence length="423" mass="45937">MTDLLSRAHAVALDAADPLRGLRDAFVFPQHGDDDQTYFVGNSLGLQPRAARAMVDEVLDRWGALAVEGHFTGPTQWLTYHQLVRDGLARVVGAQPGEVVAMNTLSVNLHLMMASFYRPTAERGAILIEAGAFPSDRHAVESQLRLHGLDPATHLIEVDADEPNGTVSMTAIAEAIAQHGPRLALVLWPGIQYRTGQAFDLAEIVRLARAQGAAVGFDLAHAVGNLPLTLHDDGVDFAVWCHYKYLNAGPGAVGGCFVHARHANSDLPRMAGWWGHEQQTRFRMDPQFVPSPGAEGWQLSNPPVLALAPLRASLALFDQAGMAALRAKSEQLTGHLEQLIHARVPQALQIVTPAEPARRGCQLSLRVAGGRARGRALFEHLHAAGVLGDWREPDVIRIAPVPLYNRFSDLHTFVEQVEAWAAA</sequence>
<name>KYNU_XANE5</name>
<protein>
    <recommendedName>
        <fullName evidence="1">Kynureninase</fullName>
        <ecNumber evidence="1">3.7.1.3</ecNumber>
    </recommendedName>
    <alternativeName>
        <fullName evidence="1">L-kynurenine hydrolase</fullName>
    </alternativeName>
</protein>
<comment type="function">
    <text evidence="1">Catalyzes the cleavage of L-kynurenine (L-Kyn) and L-3-hydroxykynurenine (L-3OHKyn) into anthranilic acid (AA) and 3-hydroxyanthranilic acid (3-OHAA), respectively.</text>
</comment>
<comment type="catalytic activity">
    <reaction evidence="1">
        <text>L-kynurenine + H2O = anthranilate + L-alanine + H(+)</text>
        <dbReference type="Rhea" id="RHEA:16813"/>
        <dbReference type="ChEBI" id="CHEBI:15377"/>
        <dbReference type="ChEBI" id="CHEBI:15378"/>
        <dbReference type="ChEBI" id="CHEBI:16567"/>
        <dbReference type="ChEBI" id="CHEBI:57959"/>
        <dbReference type="ChEBI" id="CHEBI:57972"/>
        <dbReference type="EC" id="3.7.1.3"/>
    </reaction>
</comment>
<comment type="catalytic activity">
    <reaction evidence="1">
        <text>3-hydroxy-L-kynurenine + H2O = 3-hydroxyanthranilate + L-alanine + H(+)</text>
        <dbReference type="Rhea" id="RHEA:25143"/>
        <dbReference type="ChEBI" id="CHEBI:15377"/>
        <dbReference type="ChEBI" id="CHEBI:15378"/>
        <dbReference type="ChEBI" id="CHEBI:36559"/>
        <dbReference type="ChEBI" id="CHEBI:57972"/>
        <dbReference type="ChEBI" id="CHEBI:58125"/>
        <dbReference type="EC" id="3.7.1.3"/>
    </reaction>
</comment>
<comment type="cofactor">
    <cofactor evidence="1">
        <name>pyridoxal 5'-phosphate</name>
        <dbReference type="ChEBI" id="CHEBI:597326"/>
    </cofactor>
</comment>
<comment type="pathway">
    <text evidence="1">Amino-acid degradation; L-kynurenine degradation; L-alanine and anthranilate from L-kynurenine: step 1/1.</text>
</comment>
<comment type="pathway">
    <text evidence="1">Cofactor biosynthesis; NAD(+) biosynthesis; quinolinate from L-kynurenine: step 2/3.</text>
</comment>
<comment type="subunit">
    <text evidence="1">Homodimer.</text>
</comment>
<comment type="similarity">
    <text evidence="1">Belongs to the kynureninase family.</text>
</comment>
<organism>
    <name type="scientific">Xanthomonas euvesicatoria pv. vesicatoria (strain 85-10)</name>
    <name type="common">Xanthomonas campestris pv. vesicatoria</name>
    <dbReference type="NCBI Taxonomy" id="316273"/>
    <lineage>
        <taxon>Bacteria</taxon>
        <taxon>Pseudomonadati</taxon>
        <taxon>Pseudomonadota</taxon>
        <taxon>Gammaproteobacteria</taxon>
        <taxon>Lysobacterales</taxon>
        <taxon>Lysobacteraceae</taxon>
        <taxon>Xanthomonas</taxon>
    </lineage>
</organism>
<dbReference type="EC" id="3.7.1.3" evidence="1"/>
<dbReference type="EMBL" id="AM039952">
    <property type="protein sequence ID" value="CAJ23317.1"/>
    <property type="molecule type" value="Genomic_DNA"/>
</dbReference>
<dbReference type="RefSeq" id="WP_011347013.1">
    <property type="nucleotide sequence ID" value="NZ_CP017190.1"/>
</dbReference>
<dbReference type="SMR" id="Q3BV40"/>
<dbReference type="STRING" id="456327.BJD11_14375"/>
<dbReference type="GeneID" id="97509981"/>
<dbReference type="KEGG" id="xcv:XCV1642"/>
<dbReference type="eggNOG" id="COG3844">
    <property type="taxonomic scope" value="Bacteria"/>
</dbReference>
<dbReference type="HOGENOM" id="CLU_003433_4_0_6"/>
<dbReference type="UniPathway" id="UPA00253">
    <property type="reaction ID" value="UER00329"/>
</dbReference>
<dbReference type="UniPathway" id="UPA00334">
    <property type="reaction ID" value="UER00455"/>
</dbReference>
<dbReference type="Proteomes" id="UP000007069">
    <property type="component" value="Chromosome"/>
</dbReference>
<dbReference type="GO" id="GO:0005737">
    <property type="term" value="C:cytoplasm"/>
    <property type="evidence" value="ECO:0007669"/>
    <property type="project" value="InterPro"/>
</dbReference>
<dbReference type="GO" id="GO:0030429">
    <property type="term" value="F:kynureninase activity"/>
    <property type="evidence" value="ECO:0007669"/>
    <property type="project" value="UniProtKB-UniRule"/>
</dbReference>
<dbReference type="GO" id="GO:0030170">
    <property type="term" value="F:pyridoxal phosphate binding"/>
    <property type="evidence" value="ECO:0007669"/>
    <property type="project" value="UniProtKB-UniRule"/>
</dbReference>
<dbReference type="GO" id="GO:0043420">
    <property type="term" value="P:anthranilate metabolic process"/>
    <property type="evidence" value="ECO:0007669"/>
    <property type="project" value="TreeGrafter"/>
</dbReference>
<dbReference type="GO" id="GO:0097053">
    <property type="term" value="P:L-kynurenine catabolic process"/>
    <property type="evidence" value="ECO:0007669"/>
    <property type="project" value="UniProtKB-UniRule"/>
</dbReference>
<dbReference type="GO" id="GO:0019441">
    <property type="term" value="P:L-tryptophan catabolic process to kynurenine"/>
    <property type="evidence" value="ECO:0007669"/>
    <property type="project" value="TreeGrafter"/>
</dbReference>
<dbReference type="GO" id="GO:0009435">
    <property type="term" value="P:NAD biosynthetic process"/>
    <property type="evidence" value="ECO:0007669"/>
    <property type="project" value="UniProtKB-UniPathway"/>
</dbReference>
<dbReference type="GO" id="GO:0019805">
    <property type="term" value="P:quinolinate biosynthetic process"/>
    <property type="evidence" value="ECO:0007669"/>
    <property type="project" value="UniProtKB-UniRule"/>
</dbReference>
<dbReference type="FunFam" id="3.40.640.10:FF:000031">
    <property type="entry name" value="Kynureninase"/>
    <property type="match status" value="1"/>
</dbReference>
<dbReference type="Gene3D" id="3.90.1150.10">
    <property type="entry name" value="Aspartate Aminotransferase, domain 1"/>
    <property type="match status" value="1"/>
</dbReference>
<dbReference type="Gene3D" id="3.40.640.10">
    <property type="entry name" value="Type I PLP-dependent aspartate aminotransferase-like (Major domain)"/>
    <property type="match status" value="1"/>
</dbReference>
<dbReference type="HAMAP" id="MF_01970">
    <property type="entry name" value="Kynureninase"/>
    <property type="match status" value="1"/>
</dbReference>
<dbReference type="InterPro" id="IPR010111">
    <property type="entry name" value="Kynureninase"/>
</dbReference>
<dbReference type="InterPro" id="IPR015424">
    <property type="entry name" value="PyrdxlP-dep_Trfase"/>
</dbReference>
<dbReference type="InterPro" id="IPR015421">
    <property type="entry name" value="PyrdxlP-dep_Trfase_major"/>
</dbReference>
<dbReference type="InterPro" id="IPR015422">
    <property type="entry name" value="PyrdxlP-dep_Trfase_small"/>
</dbReference>
<dbReference type="NCBIfam" id="TIGR01814">
    <property type="entry name" value="kynureninase"/>
    <property type="match status" value="1"/>
</dbReference>
<dbReference type="PANTHER" id="PTHR14084">
    <property type="entry name" value="KYNURENINASE"/>
    <property type="match status" value="1"/>
</dbReference>
<dbReference type="PANTHER" id="PTHR14084:SF0">
    <property type="entry name" value="KYNURENINASE"/>
    <property type="match status" value="1"/>
</dbReference>
<dbReference type="Pfam" id="PF22580">
    <property type="entry name" value="KYNU_C"/>
    <property type="match status" value="1"/>
</dbReference>
<dbReference type="PIRSF" id="PIRSF038800">
    <property type="entry name" value="KYNU"/>
    <property type="match status" value="1"/>
</dbReference>
<dbReference type="SUPFAM" id="SSF53383">
    <property type="entry name" value="PLP-dependent transferases"/>
    <property type="match status" value="1"/>
</dbReference>
<keyword id="KW-0378">Hydrolase</keyword>
<keyword id="KW-0662">Pyridine nucleotide biosynthesis</keyword>
<keyword id="KW-0663">Pyridoxal phosphate</keyword>
<gene>
    <name evidence="1" type="primary">kynU</name>
    <name type="ordered locus">XCV1642</name>
</gene>
<reference key="1">
    <citation type="journal article" date="2005" name="J. Bacteriol.">
        <title>Insights into genome plasticity and pathogenicity of the plant pathogenic Bacterium Xanthomonas campestris pv. vesicatoria revealed by the complete genome sequence.</title>
        <authorList>
            <person name="Thieme F."/>
            <person name="Koebnik R."/>
            <person name="Bekel T."/>
            <person name="Berger C."/>
            <person name="Boch J."/>
            <person name="Buettner D."/>
            <person name="Caldana C."/>
            <person name="Gaigalat L."/>
            <person name="Goesmann A."/>
            <person name="Kay S."/>
            <person name="Kirchner O."/>
            <person name="Lanz C."/>
            <person name="Linke B."/>
            <person name="McHardy A.C."/>
            <person name="Meyer F."/>
            <person name="Mittenhuber G."/>
            <person name="Nies D.H."/>
            <person name="Niesbach-Kloesgen U."/>
            <person name="Patschkowski T."/>
            <person name="Rueckert C."/>
            <person name="Rupp O."/>
            <person name="Schneiker S."/>
            <person name="Schuster S.C."/>
            <person name="Vorhoelter F.J."/>
            <person name="Weber E."/>
            <person name="Puehler A."/>
            <person name="Bonas U."/>
            <person name="Bartels D."/>
            <person name="Kaiser O."/>
        </authorList>
    </citation>
    <scope>NUCLEOTIDE SEQUENCE [LARGE SCALE GENOMIC DNA]</scope>
    <source>
        <strain>85-10</strain>
    </source>
</reference>